<name>DYR_NEIMB</name>
<comment type="function">
    <text evidence="1">Key enzyme in folate metabolism. Catalyzes an essential reaction for de novo glycine and purine synthesis, and for DNA precursor synthesis (By similarity).</text>
</comment>
<comment type="catalytic activity">
    <reaction evidence="2">
        <text>(6S)-5,6,7,8-tetrahydrofolate + NADP(+) = 7,8-dihydrofolate + NADPH + H(+)</text>
        <dbReference type="Rhea" id="RHEA:15009"/>
        <dbReference type="ChEBI" id="CHEBI:15378"/>
        <dbReference type="ChEBI" id="CHEBI:57451"/>
        <dbReference type="ChEBI" id="CHEBI:57453"/>
        <dbReference type="ChEBI" id="CHEBI:57783"/>
        <dbReference type="ChEBI" id="CHEBI:58349"/>
        <dbReference type="EC" id="1.5.1.3"/>
    </reaction>
</comment>
<comment type="pathway">
    <text>Cofactor biosynthesis; tetrahydrofolate biosynthesis; 5,6,7,8-tetrahydrofolate from 7,8-dihydrofolate: step 1/1.</text>
</comment>
<comment type="similarity">
    <text evidence="3">Belongs to the dihydrofolate reductase family.</text>
</comment>
<reference key="1">
    <citation type="journal article" date="2000" name="Science">
        <title>Complete genome sequence of Neisseria meningitidis serogroup B strain MC58.</title>
        <authorList>
            <person name="Tettelin H."/>
            <person name="Saunders N.J."/>
            <person name="Heidelberg J.F."/>
            <person name="Jeffries A.C."/>
            <person name="Nelson K.E."/>
            <person name="Eisen J.A."/>
            <person name="Ketchum K.A."/>
            <person name="Hood D.W."/>
            <person name="Peden J.F."/>
            <person name="Dodson R.J."/>
            <person name="Nelson W.C."/>
            <person name="Gwinn M.L."/>
            <person name="DeBoy R.T."/>
            <person name="Peterson J.D."/>
            <person name="Hickey E.K."/>
            <person name="Haft D.H."/>
            <person name="Salzberg S.L."/>
            <person name="White O."/>
            <person name="Fleischmann R.D."/>
            <person name="Dougherty B.A."/>
            <person name="Mason T.M."/>
            <person name="Ciecko A."/>
            <person name="Parksey D.S."/>
            <person name="Blair E."/>
            <person name="Cittone H."/>
            <person name="Clark E.B."/>
            <person name="Cotton M.D."/>
            <person name="Utterback T.R."/>
            <person name="Khouri H.M."/>
            <person name="Qin H."/>
            <person name="Vamathevan J.J."/>
            <person name="Gill J."/>
            <person name="Scarlato V."/>
            <person name="Masignani V."/>
            <person name="Pizza M."/>
            <person name="Grandi G."/>
            <person name="Sun L."/>
            <person name="Smith H.O."/>
            <person name="Fraser C.M."/>
            <person name="Moxon E.R."/>
            <person name="Rappuoli R."/>
            <person name="Venter J.C."/>
        </authorList>
    </citation>
    <scope>NUCLEOTIDE SEQUENCE [LARGE SCALE GENOMIC DNA]</scope>
    <source>
        <strain>ATCC BAA-335 / MC58</strain>
    </source>
</reference>
<accession>Q9K168</accession>
<proteinExistence type="inferred from homology"/>
<organism>
    <name type="scientific">Neisseria meningitidis serogroup B (strain ATCC BAA-335 / MC58)</name>
    <dbReference type="NCBI Taxonomy" id="122586"/>
    <lineage>
        <taxon>Bacteria</taxon>
        <taxon>Pseudomonadati</taxon>
        <taxon>Pseudomonadota</taxon>
        <taxon>Betaproteobacteria</taxon>
        <taxon>Neisseriales</taxon>
        <taxon>Neisseriaceae</taxon>
        <taxon>Neisseria</taxon>
    </lineage>
</organism>
<keyword id="KW-0521">NADP</keyword>
<keyword id="KW-0554">One-carbon metabolism</keyword>
<keyword id="KW-0560">Oxidoreductase</keyword>
<keyword id="KW-1185">Reference proteome</keyword>
<gene>
    <name type="primary">folA</name>
    <name type="ordered locus">NMB0308</name>
</gene>
<sequence length="162" mass="17752">MLKITLIAACAENLCIGAGNAMPWHIPEDFAFFKAYTLGKPVIMGRKTWESLPVKPLPGRRNIVISRQADYCAAGAETAASLEAALALCAGAEEAVIMGGAQIYGQAMPLATDLRITEVDLSVEGDAFFPAIDRTHWKEAERTERRVSSKGTRYAFVHYLRY</sequence>
<feature type="chain" id="PRO_0000186403" description="Dihydrofolate reductase">
    <location>
        <begin position="1"/>
        <end position="162"/>
    </location>
</feature>
<feature type="domain" description="DHFR" evidence="2">
    <location>
        <begin position="3"/>
        <end position="161"/>
    </location>
</feature>
<feature type="binding site" evidence="1">
    <location>
        <begin position="7"/>
        <end position="9"/>
    </location>
    <ligand>
        <name>substrate</name>
    </ligand>
</feature>
<feature type="binding site" evidence="1">
    <location>
        <begin position="8"/>
        <end position="9"/>
    </location>
    <ligand>
        <name>NADP(+)</name>
        <dbReference type="ChEBI" id="CHEBI:58349"/>
    </ligand>
</feature>
<feature type="binding site" evidence="1">
    <location>
        <begin position="16"/>
        <end position="21"/>
    </location>
    <ligand>
        <name>NADP(+)</name>
        <dbReference type="ChEBI" id="CHEBI:58349"/>
    </ligand>
</feature>
<feature type="binding site" evidence="1">
    <location>
        <position position="29"/>
    </location>
    <ligand>
        <name>substrate</name>
    </ligand>
</feature>
<feature type="binding site" evidence="1">
    <location>
        <begin position="45"/>
        <end position="48"/>
    </location>
    <ligand>
        <name>NADP(+)</name>
        <dbReference type="ChEBI" id="CHEBI:58349"/>
    </ligand>
</feature>
<feature type="binding site" evidence="1">
    <location>
        <position position="60"/>
    </location>
    <ligand>
        <name>substrate</name>
    </ligand>
</feature>
<feature type="binding site" evidence="1">
    <location>
        <begin position="65"/>
        <end position="68"/>
    </location>
    <ligand>
        <name>NADP(+)</name>
        <dbReference type="ChEBI" id="CHEBI:58349"/>
    </ligand>
</feature>
<feature type="binding site" evidence="1">
    <location>
        <begin position="98"/>
        <end position="103"/>
    </location>
    <ligand>
        <name>NADP(+)</name>
        <dbReference type="ChEBI" id="CHEBI:58349"/>
    </ligand>
</feature>
<feature type="binding site" evidence="1">
    <location>
        <position position="117"/>
    </location>
    <ligand>
        <name>substrate</name>
    </ligand>
</feature>
<protein>
    <recommendedName>
        <fullName>Dihydrofolate reductase</fullName>
        <ecNumber>1.5.1.3</ecNumber>
    </recommendedName>
</protein>
<dbReference type="EC" id="1.5.1.3"/>
<dbReference type="EMBL" id="AE002098">
    <property type="protein sequence ID" value="AAF40754.1"/>
    <property type="molecule type" value="Genomic_DNA"/>
</dbReference>
<dbReference type="PIR" id="G81214">
    <property type="entry name" value="G81214"/>
</dbReference>
<dbReference type="RefSeq" id="NP_273358.1">
    <property type="nucleotide sequence ID" value="NC_003112.2"/>
</dbReference>
<dbReference type="RefSeq" id="WP_002218701.1">
    <property type="nucleotide sequence ID" value="NC_003112.2"/>
</dbReference>
<dbReference type="SMR" id="Q9K168"/>
<dbReference type="FunCoup" id="Q9K168">
    <property type="interactions" value="394"/>
</dbReference>
<dbReference type="STRING" id="122586.NMB0308"/>
<dbReference type="PaxDb" id="122586-NMB0308"/>
<dbReference type="KEGG" id="nme:NMB0308"/>
<dbReference type="PATRIC" id="fig|122586.8.peg.383"/>
<dbReference type="HOGENOM" id="CLU_043966_5_1_4"/>
<dbReference type="InParanoid" id="Q9K168"/>
<dbReference type="OrthoDB" id="9804315at2"/>
<dbReference type="UniPathway" id="UPA00077">
    <property type="reaction ID" value="UER00158"/>
</dbReference>
<dbReference type="Proteomes" id="UP000000425">
    <property type="component" value="Chromosome"/>
</dbReference>
<dbReference type="GO" id="GO:0005829">
    <property type="term" value="C:cytosol"/>
    <property type="evidence" value="ECO:0000318"/>
    <property type="project" value="GO_Central"/>
</dbReference>
<dbReference type="GO" id="GO:0004146">
    <property type="term" value="F:dihydrofolate reductase activity"/>
    <property type="evidence" value="ECO:0000318"/>
    <property type="project" value="GO_Central"/>
</dbReference>
<dbReference type="GO" id="GO:0050661">
    <property type="term" value="F:NADP binding"/>
    <property type="evidence" value="ECO:0000318"/>
    <property type="project" value="GO_Central"/>
</dbReference>
<dbReference type="GO" id="GO:0046452">
    <property type="term" value="P:dihydrofolate metabolic process"/>
    <property type="evidence" value="ECO:0000318"/>
    <property type="project" value="GO_Central"/>
</dbReference>
<dbReference type="GO" id="GO:0046655">
    <property type="term" value="P:folic acid metabolic process"/>
    <property type="evidence" value="ECO:0000318"/>
    <property type="project" value="GO_Central"/>
</dbReference>
<dbReference type="GO" id="GO:0006730">
    <property type="term" value="P:one-carbon metabolic process"/>
    <property type="evidence" value="ECO:0007669"/>
    <property type="project" value="UniProtKB-KW"/>
</dbReference>
<dbReference type="GO" id="GO:0046654">
    <property type="term" value="P:tetrahydrofolate biosynthetic process"/>
    <property type="evidence" value="ECO:0000318"/>
    <property type="project" value="GO_Central"/>
</dbReference>
<dbReference type="CDD" id="cd00209">
    <property type="entry name" value="DHFR"/>
    <property type="match status" value="1"/>
</dbReference>
<dbReference type="FunFam" id="3.40.430.10:FF:000001">
    <property type="entry name" value="Dihydrofolate reductase"/>
    <property type="match status" value="1"/>
</dbReference>
<dbReference type="Gene3D" id="3.40.430.10">
    <property type="entry name" value="Dihydrofolate Reductase, subunit A"/>
    <property type="match status" value="1"/>
</dbReference>
<dbReference type="InterPro" id="IPR012259">
    <property type="entry name" value="DHFR"/>
</dbReference>
<dbReference type="InterPro" id="IPR024072">
    <property type="entry name" value="DHFR-like_dom_sf"/>
</dbReference>
<dbReference type="InterPro" id="IPR017925">
    <property type="entry name" value="DHFR_CS"/>
</dbReference>
<dbReference type="InterPro" id="IPR001796">
    <property type="entry name" value="DHFR_dom"/>
</dbReference>
<dbReference type="PANTHER" id="PTHR48069">
    <property type="entry name" value="DIHYDROFOLATE REDUCTASE"/>
    <property type="match status" value="1"/>
</dbReference>
<dbReference type="PANTHER" id="PTHR48069:SF3">
    <property type="entry name" value="DIHYDROFOLATE REDUCTASE"/>
    <property type="match status" value="1"/>
</dbReference>
<dbReference type="Pfam" id="PF00186">
    <property type="entry name" value="DHFR_1"/>
    <property type="match status" value="1"/>
</dbReference>
<dbReference type="PIRSF" id="PIRSF000194">
    <property type="entry name" value="DHFR"/>
    <property type="match status" value="1"/>
</dbReference>
<dbReference type="PRINTS" id="PR00070">
    <property type="entry name" value="DHFR"/>
</dbReference>
<dbReference type="SUPFAM" id="SSF53597">
    <property type="entry name" value="Dihydrofolate reductase-like"/>
    <property type="match status" value="1"/>
</dbReference>
<dbReference type="PROSITE" id="PS00075">
    <property type="entry name" value="DHFR_1"/>
    <property type="match status" value="1"/>
</dbReference>
<dbReference type="PROSITE" id="PS51330">
    <property type="entry name" value="DHFR_2"/>
    <property type="match status" value="1"/>
</dbReference>
<evidence type="ECO:0000250" key="1"/>
<evidence type="ECO:0000255" key="2">
    <source>
        <dbReference type="PROSITE-ProRule" id="PRU00660"/>
    </source>
</evidence>
<evidence type="ECO:0000305" key="3"/>